<name>RL2_PELPD</name>
<organism>
    <name type="scientific">Pelobacter propionicus (strain DSM 2379 / NBRC 103807 / OttBd1)</name>
    <dbReference type="NCBI Taxonomy" id="338966"/>
    <lineage>
        <taxon>Bacteria</taxon>
        <taxon>Pseudomonadati</taxon>
        <taxon>Thermodesulfobacteriota</taxon>
        <taxon>Desulfuromonadia</taxon>
        <taxon>Desulfuromonadales</taxon>
        <taxon>Desulfuromonadaceae</taxon>
        <taxon>Pelobacter</taxon>
    </lineage>
</organism>
<comment type="function">
    <text evidence="1">One of the primary rRNA binding proteins. Required for association of the 30S and 50S subunits to form the 70S ribosome, for tRNA binding and peptide bond formation. It has been suggested to have peptidyltransferase activity; this is somewhat controversial. Makes several contacts with the 16S rRNA in the 70S ribosome.</text>
</comment>
<comment type="subunit">
    <text evidence="1">Part of the 50S ribosomal subunit. Forms a bridge to the 30S subunit in the 70S ribosome.</text>
</comment>
<comment type="similarity">
    <text evidence="1">Belongs to the universal ribosomal protein uL2 family.</text>
</comment>
<feature type="chain" id="PRO_0000309978" description="Large ribosomal subunit protein uL2">
    <location>
        <begin position="1"/>
        <end position="274"/>
    </location>
</feature>
<feature type="region of interest" description="Disordered" evidence="2">
    <location>
        <begin position="223"/>
        <end position="258"/>
    </location>
</feature>
<evidence type="ECO:0000255" key="1">
    <source>
        <dbReference type="HAMAP-Rule" id="MF_01320"/>
    </source>
</evidence>
<evidence type="ECO:0000256" key="2">
    <source>
        <dbReference type="SAM" id="MobiDB-lite"/>
    </source>
</evidence>
<evidence type="ECO:0000305" key="3"/>
<sequence length="274" mass="30044">MGIKIYKPTSPGRRHQTCSSFEEITTSTPEKSLLIKLKKSGGRNALGRVTSRHQGGGHKQKYRIIDFRRDKISIPAKVASIEYDPYRSARIALLHYVDGEKRYILAPLDLKVGDTVLSGPEADIKPGNALPLKAIPLGTIIHNVELKLGKGAQLARSAGTFAQLMAKEGRYSQVKLPSGEVRMVLQDCYATIGQVGNVDHEKVSLGKAGRARWLGKRPKVRGVAMNPVDHPHGGGEGRTSGGRHPVTPWGIPTKGYKTRTNKSTDRFIVKKRTK</sequence>
<protein>
    <recommendedName>
        <fullName evidence="1">Large ribosomal subunit protein uL2</fullName>
    </recommendedName>
    <alternativeName>
        <fullName evidence="3">50S ribosomal protein L2</fullName>
    </alternativeName>
</protein>
<gene>
    <name evidence="1" type="primary">rplB</name>
    <name type="ordered locus">Ppro_0683</name>
</gene>
<accession>A1ALU4</accession>
<keyword id="KW-1185">Reference proteome</keyword>
<keyword id="KW-0687">Ribonucleoprotein</keyword>
<keyword id="KW-0689">Ribosomal protein</keyword>
<keyword id="KW-0694">RNA-binding</keyword>
<keyword id="KW-0699">rRNA-binding</keyword>
<proteinExistence type="inferred from homology"/>
<dbReference type="EMBL" id="CP000482">
    <property type="protein sequence ID" value="ABK98314.1"/>
    <property type="molecule type" value="Genomic_DNA"/>
</dbReference>
<dbReference type="RefSeq" id="WP_011734626.1">
    <property type="nucleotide sequence ID" value="NC_008609.1"/>
</dbReference>
<dbReference type="SMR" id="A1ALU4"/>
<dbReference type="STRING" id="338966.Ppro_0683"/>
<dbReference type="KEGG" id="ppd:Ppro_0683"/>
<dbReference type="eggNOG" id="COG0090">
    <property type="taxonomic scope" value="Bacteria"/>
</dbReference>
<dbReference type="HOGENOM" id="CLU_036235_2_1_7"/>
<dbReference type="OrthoDB" id="9778722at2"/>
<dbReference type="Proteomes" id="UP000006732">
    <property type="component" value="Chromosome"/>
</dbReference>
<dbReference type="GO" id="GO:0015934">
    <property type="term" value="C:large ribosomal subunit"/>
    <property type="evidence" value="ECO:0007669"/>
    <property type="project" value="InterPro"/>
</dbReference>
<dbReference type="GO" id="GO:0019843">
    <property type="term" value="F:rRNA binding"/>
    <property type="evidence" value="ECO:0007669"/>
    <property type="project" value="UniProtKB-UniRule"/>
</dbReference>
<dbReference type="GO" id="GO:0003735">
    <property type="term" value="F:structural constituent of ribosome"/>
    <property type="evidence" value="ECO:0007669"/>
    <property type="project" value="InterPro"/>
</dbReference>
<dbReference type="GO" id="GO:0016740">
    <property type="term" value="F:transferase activity"/>
    <property type="evidence" value="ECO:0007669"/>
    <property type="project" value="InterPro"/>
</dbReference>
<dbReference type="GO" id="GO:0002181">
    <property type="term" value="P:cytoplasmic translation"/>
    <property type="evidence" value="ECO:0007669"/>
    <property type="project" value="TreeGrafter"/>
</dbReference>
<dbReference type="FunFam" id="2.30.30.30:FF:000001">
    <property type="entry name" value="50S ribosomal protein L2"/>
    <property type="match status" value="1"/>
</dbReference>
<dbReference type="FunFam" id="2.40.50.140:FF:000003">
    <property type="entry name" value="50S ribosomal protein L2"/>
    <property type="match status" value="1"/>
</dbReference>
<dbReference type="FunFam" id="4.10.950.10:FF:000001">
    <property type="entry name" value="50S ribosomal protein L2"/>
    <property type="match status" value="1"/>
</dbReference>
<dbReference type="Gene3D" id="2.30.30.30">
    <property type="match status" value="1"/>
</dbReference>
<dbReference type="Gene3D" id="2.40.50.140">
    <property type="entry name" value="Nucleic acid-binding proteins"/>
    <property type="match status" value="1"/>
</dbReference>
<dbReference type="Gene3D" id="4.10.950.10">
    <property type="entry name" value="Ribosomal protein L2, domain 3"/>
    <property type="match status" value="1"/>
</dbReference>
<dbReference type="HAMAP" id="MF_01320_B">
    <property type="entry name" value="Ribosomal_uL2_B"/>
    <property type="match status" value="1"/>
</dbReference>
<dbReference type="InterPro" id="IPR012340">
    <property type="entry name" value="NA-bd_OB-fold"/>
</dbReference>
<dbReference type="InterPro" id="IPR014722">
    <property type="entry name" value="Rib_uL2_dom2"/>
</dbReference>
<dbReference type="InterPro" id="IPR002171">
    <property type="entry name" value="Ribosomal_uL2"/>
</dbReference>
<dbReference type="InterPro" id="IPR005880">
    <property type="entry name" value="Ribosomal_uL2_bac/org-type"/>
</dbReference>
<dbReference type="InterPro" id="IPR022669">
    <property type="entry name" value="Ribosomal_uL2_C"/>
</dbReference>
<dbReference type="InterPro" id="IPR022671">
    <property type="entry name" value="Ribosomal_uL2_CS"/>
</dbReference>
<dbReference type="InterPro" id="IPR014726">
    <property type="entry name" value="Ribosomal_uL2_dom3"/>
</dbReference>
<dbReference type="InterPro" id="IPR022666">
    <property type="entry name" value="Ribosomal_uL2_RNA-bd_dom"/>
</dbReference>
<dbReference type="InterPro" id="IPR008991">
    <property type="entry name" value="Translation_prot_SH3-like_sf"/>
</dbReference>
<dbReference type="NCBIfam" id="TIGR01171">
    <property type="entry name" value="rplB_bact"/>
    <property type="match status" value="1"/>
</dbReference>
<dbReference type="PANTHER" id="PTHR13691:SF5">
    <property type="entry name" value="LARGE RIBOSOMAL SUBUNIT PROTEIN UL2M"/>
    <property type="match status" value="1"/>
</dbReference>
<dbReference type="PANTHER" id="PTHR13691">
    <property type="entry name" value="RIBOSOMAL PROTEIN L2"/>
    <property type="match status" value="1"/>
</dbReference>
<dbReference type="Pfam" id="PF00181">
    <property type="entry name" value="Ribosomal_L2"/>
    <property type="match status" value="1"/>
</dbReference>
<dbReference type="Pfam" id="PF03947">
    <property type="entry name" value="Ribosomal_L2_C"/>
    <property type="match status" value="1"/>
</dbReference>
<dbReference type="PIRSF" id="PIRSF002158">
    <property type="entry name" value="Ribosomal_L2"/>
    <property type="match status" value="1"/>
</dbReference>
<dbReference type="SMART" id="SM01383">
    <property type="entry name" value="Ribosomal_L2"/>
    <property type="match status" value="1"/>
</dbReference>
<dbReference type="SMART" id="SM01382">
    <property type="entry name" value="Ribosomal_L2_C"/>
    <property type="match status" value="1"/>
</dbReference>
<dbReference type="SUPFAM" id="SSF50249">
    <property type="entry name" value="Nucleic acid-binding proteins"/>
    <property type="match status" value="1"/>
</dbReference>
<dbReference type="SUPFAM" id="SSF50104">
    <property type="entry name" value="Translation proteins SH3-like domain"/>
    <property type="match status" value="1"/>
</dbReference>
<dbReference type="PROSITE" id="PS00467">
    <property type="entry name" value="RIBOSOMAL_L2"/>
    <property type="match status" value="1"/>
</dbReference>
<reference key="1">
    <citation type="submission" date="2006-10" db="EMBL/GenBank/DDBJ databases">
        <title>Complete sequence of chromosome of Pelobacter propionicus DSM 2379.</title>
        <authorList>
            <consortium name="US DOE Joint Genome Institute"/>
            <person name="Copeland A."/>
            <person name="Lucas S."/>
            <person name="Lapidus A."/>
            <person name="Barry K."/>
            <person name="Detter J.C."/>
            <person name="Glavina del Rio T."/>
            <person name="Hammon N."/>
            <person name="Israni S."/>
            <person name="Dalin E."/>
            <person name="Tice H."/>
            <person name="Pitluck S."/>
            <person name="Saunders E."/>
            <person name="Brettin T."/>
            <person name="Bruce D."/>
            <person name="Han C."/>
            <person name="Tapia R."/>
            <person name="Schmutz J."/>
            <person name="Larimer F."/>
            <person name="Land M."/>
            <person name="Hauser L."/>
            <person name="Kyrpides N."/>
            <person name="Kim E."/>
            <person name="Lovley D."/>
            <person name="Richardson P."/>
        </authorList>
    </citation>
    <scope>NUCLEOTIDE SEQUENCE [LARGE SCALE GENOMIC DNA]</scope>
    <source>
        <strain>DSM 2379 / NBRC 103807 / OttBd1</strain>
    </source>
</reference>